<feature type="chain" id="PRO_0000095246" description="Adenylosuccinate synthetase">
    <location>
        <begin position="1"/>
        <end position="437"/>
    </location>
</feature>
<feature type="active site" description="Proton acceptor" evidence="1">
    <location>
        <position position="13"/>
    </location>
</feature>
<feature type="active site" description="Proton donor" evidence="1">
    <location>
        <position position="41"/>
    </location>
</feature>
<feature type="binding site" evidence="1">
    <location>
        <begin position="12"/>
        <end position="18"/>
    </location>
    <ligand>
        <name>GTP</name>
        <dbReference type="ChEBI" id="CHEBI:37565"/>
    </ligand>
</feature>
<feature type="binding site" description="in other chain" evidence="1">
    <location>
        <begin position="13"/>
        <end position="16"/>
    </location>
    <ligand>
        <name>IMP</name>
        <dbReference type="ChEBI" id="CHEBI:58053"/>
        <note>ligand shared between dimeric partners</note>
    </ligand>
</feature>
<feature type="binding site" evidence="1">
    <location>
        <position position="13"/>
    </location>
    <ligand>
        <name>Mg(2+)</name>
        <dbReference type="ChEBI" id="CHEBI:18420"/>
    </ligand>
</feature>
<feature type="binding site" description="in other chain" evidence="1">
    <location>
        <begin position="38"/>
        <end position="41"/>
    </location>
    <ligand>
        <name>IMP</name>
        <dbReference type="ChEBI" id="CHEBI:58053"/>
        <note>ligand shared between dimeric partners</note>
    </ligand>
</feature>
<feature type="binding site" evidence="1">
    <location>
        <begin position="40"/>
        <end position="42"/>
    </location>
    <ligand>
        <name>GTP</name>
        <dbReference type="ChEBI" id="CHEBI:37565"/>
    </ligand>
</feature>
<feature type="binding site" evidence="1">
    <location>
        <position position="40"/>
    </location>
    <ligand>
        <name>Mg(2+)</name>
        <dbReference type="ChEBI" id="CHEBI:18420"/>
    </ligand>
</feature>
<feature type="binding site" description="in other chain" evidence="1">
    <location>
        <position position="128"/>
    </location>
    <ligand>
        <name>IMP</name>
        <dbReference type="ChEBI" id="CHEBI:58053"/>
        <note>ligand shared between dimeric partners</note>
    </ligand>
</feature>
<feature type="binding site" evidence="1">
    <location>
        <position position="142"/>
    </location>
    <ligand>
        <name>IMP</name>
        <dbReference type="ChEBI" id="CHEBI:58053"/>
        <note>ligand shared between dimeric partners</note>
    </ligand>
</feature>
<feature type="binding site" description="in other chain" evidence="1">
    <location>
        <position position="223"/>
    </location>
    <ligand>
        <name>IMP</name>
        <dbReference type="ChEBI" id="CHEBI:58053"/>
        <note>ligand shared between dimeric partners</note>
    </ligand>
</feature>
<feature type="binding site" description="in other chain" evidence="1">
    <location>
        <position position="238"/>
    </location>
    <ligand>
        <name>IMP</name>
        <dbReference type="ChEBI" id="CHEBI:58053"/>
        <note>ligand shared between dimeric partners</note>
    </ligand>
</feature>
<feature type="binding site" evidence="1">
    <location>
        <begin position="298"/>
        <end position="304"/>
    </location>
    <ligand>
        <name>substrate</name>
    </ligand>
</feature>
<feature type="binding site" description="in other chain" evidence="1">
    <location>
        <position position="302"/>
    </location>
    <ligand>
        <name>IMP</name>
        <dbReference type="ChEBI" id="CHEBI:58053"/>
        <note>ligand shared between dimeric partners</note>
    </ligand>
</feature>
<feature type="binding site" evidence="1">
    <location>
        <position position="304"/>
    </location>
    <ligand>
        <name>GTP</name>
        <dbReference type="ChEBI" id="CHEBI:37565"/>
    </ligand>
</feature>
<feature type="binding site" evidence="1">
    <location>
        <begin position="330"/>
        <end position="332"/>
    </location>
    <ligand>
        <name>GTP</name>
        <dbReference type="ChEBI" id="CHEBI:37565"/>
    </ligand>
</feature>
<feature type="binding site" evidence="1">
    <location>
        <begin position="412"/>
        <end position="414"/>
    </location>
    <ligand>
        <name>GTP</name>
        <dbReference type="ChEBI" id="CHEBI:37565"/>
    </ligand>
</feature>
<name>PURA_PARMW</name>
<proteinExistence type="inferred from homology"/>
<sequence length="437" mass="47473">MANVVVIGAQWGDEGKGKITDLLSRSADVVVRYQGGVNAGHTIVVDDRVLKLHLIPSGILYPETICLIGSGTVVDPKVMLGELDMLIANDIDISGLQLASTAHVTMPYHRLLDLAMEKQRGDRRIGTTGRGIGPTYADKSQRSGIRVIDLLDEARLRERLEGPLQEKNQLLETIYGVEPLDAETVIKEYLGYGKRLAPHVVECTQAIHQAARARKNILFEGAQGTLLDLDHGTYPYVTSSNPVSGGACIGAGVGPTLIDRVIGVAKAYTTRVGEGPFPTELSGRLNDQLTERGGEFGTTTGRRRRCGWFDGVIGRYAVQVNGLDCLAVTKLDVLDELDAIQVCVAYELDGERIEHFPSSAEDFARCNPLFETLPGWQCSTEDCRKLEDLPDAAMAYLRFLADLMEVPIAIVSLGASRDQTIVVEDPIHGPKRALLSA</sequence>
<keyword id="KW-0963">Cytoplasm</keyword>
<keyword id="KW-0342">GTP-binding</keyword>
<keyword id="KW-0436">Ligase</keyword>
<keyword id="KW-0460">Magnesium</keyword>
<keyword id="KW-0479">Metal-binding</keyword>
<keyword id="KW-0547">Nucleotide-binding</keyword>
<keyword id="KW-0658">Purine biosynthesis</keyword>
<reference key="1">
    <citation type="journal article" date="2003" name="Nature">
        <title>The genome of a motile marine Synechococcus.</title>
        <authorList>
            <person name="Palenik B."/>
            <person name="Brahamsha B."/>
            <person name="Larimer F.W."/>
            <person name="Land M.L."/>
            <person name="Hauser L."/>
            <person name="Chain P."/>
            <person name="Lamerdin J.E."/>
            <person name="Regala W."/>
            <person name="Allen E.E."/>
            <person name="McCarren J."/>
            <person name="Paulsen I.T."/>
            <person name="Dufresne A."/>
            <person name="Partensky F."/>
            <person name="Webb E.A."/>
            <person name="Waterbury J."/>
        </authorList>
    </citation>
    <scope>NUCLEOTIDE SEQUENCE [LARGE SCALE GENOMIC DNA]</scope>
    <source>
        <strain>WH8102</strain>
    </source>
</reference>
<accession>Q7U5D4</accession>
<organism>
    <name type="scientific">Parasynechococcus marenigrum (strain WH8102)</name>
    <dbReference type="NCBI Taxonomy" id="84588"/>
    <lineage>
        <taxon>Bacteria</taxon>
        <taxon>Bacillati</taxon>
        <taxon>Cyanobacteriota</taxon>
        <taxon>Cyanophyceae</taxon>
        <taxon>Synechococcales</taxon>
        <taxon>Prochlorococcaceae</taxon>
        <taxon>Parasynechococcus</taxon>
        <taxon>Parasynechococcus marenigrum</taxon>
    </lineage>
</organism>
<comment type="function">
    <text evidence="1">Plays an important role in the de novo pathway of purine nucleotide biosynthesis. Catalyzes the first committed step in the biosynthesis of AMP from IMP.</text>
</comment>
<comment type="catalytic activity">
    <reaction evidence="1">
        <text>IMP + L-aspartate + GTP = N(6)-(1,2-dicarboxyethyl)-AMP + GDP + phosphate + 2 H(+)</text>
        <dbReference type="Rhea" id="RHEA:15753"/>
        <dbReference type="ChEBI" id="CHEBI:15378"/>
        <dbReference type="ChEBI" id="CHEBI:29991"/>
        <dbReference type="ChEBI" id="CHEBI:37565"/>
        <dbReference type="ChEBI" id="CHEBI:43474"/>
        <dbReference type="ChEBI" id="CHEBI:57567"/>
        <dbReference type="ChEBI" id="CHEBI:58053"/>
        <dbReference type="ChEBI" id="CHEBI:58189"/>
        <dbReference type="EC" id="6.3.4.4"/>
    </reaction>
</comment>
<comment type="cofactor">
    <cofactor evidence="1">
        <name>Mg(2+)</name>
        <dbReference type="ChEBI" id="CHEBI:18420"/>
    </cofactor>
    <text evidence="1">Binds 1 Mg(2+) ion per subunit.</text>
</comment>
<comment type="pathway">
    <text evidence="1">Purine metabolism; AMP biosynthesis via de novo pathway; AMP from IMP: step 1/2.</text>
</comment>
<comment type="subunit">
    <text evidence="1">Homodimer.</text>
</comment>
<comment type="subcellular location">
    <subcellularLocation>
        <location evidence="1">Cytoplasm</location>
    </subcellularLocation>
</comment>
<comment type="similarity">
    <text evidence="1">Belongs to the adenylosuccinate synthetase family.</text>
</comment>
<gene>
    <name evidence="1" type="primary">purA</name>
    <name type="synonym">adeK</name>
    <name type="ordered locus">SYNW1773</name>
</gene>
<protein>
    <recommendedName>
        <fullName evidence="1">Adenylosuccinate synthetase</fullName>
        <shortName evidence="1">AMPSase</shortName>
        <shortName evidence="1">AdSS</shortName>
        <ecNumber evidence="1">6.3.4.4</ecNumber>
    </recommendedName>
    <alternativeName>
        <fullName evidence="1">IMP--aspartate ligase</fullName>
    </alternativeName>
</protein>
<evidence type="ECO:0000255" key="1">
    <source>
        <dbReference type="HAMAP-Rule" id="MF_00011"/>
    </source>
</evidence>
<dbReference type="EC" id="6.3.4.4" evidence="1"/>
<dbReference type="EMBL" id="BX569693">
    <property type="protein sequence ID" value="CAE08288.1"/>
    <property type="molecule type" value="Genomic_DNA"/>
</dbReference>
<dbReference type="SMR" id="Q7U5D4"/>
<dbReference type="STRING" id="84588.SYNW1773"/>
<dbReference type="KEGG" id="syw:SYNW1773"/>
<dbReference type="eggNOG" id="COG0104">
    <property type="taxonomic scope" value="Bacteria"/>
</dbReference>
<dbReference type="HOGENOM" id="CLU_029848_0_0_3"/>
<dbReference type="UniPathway" id="UPA00075">
    <property type="reaction ID" value="UER00335"/>
</dbReference>
<dbReference type="Proteomes" id="UP000001422">
    <property type="component" value="Chromosome"/>
</dbReference>
<dbReference type="GO" id="GO:0005737">
    <property type="term" value="C:cytoplasm"/>
    <property type="evidence" value="ECO:0007669"/>
    <property type="project" value="UniProtKB-SubCell"/>
</dbReference>
<dbReference type="GO" id="GO:0004019">
    <property type="term" value="F:adenylosuccinate synthase activity"/>
    <property type="evidence" value="ECO:0007669"/>
    <property type="project" value="UniProtKB-UniRule"/>
</dbReference>
<dbReference type="GO" id="GO:0005525">
    <property type="term" value="F:GTP binding"/>
    <property type="evidence" value="ECO:0007669"/>
    <property type="project" value="UniProtKB-UniRule"/>
</dbReference>
<dbReference type="GO" id="GO:0000287">
    <property type="term" value="F:magnesium ion binding"/>
    <property type="evidence" value="ECO:0007669"/>
    <property type="project" value="UniProtKB-UniRule"/>
</dbReference>
<dbReference type="GO" id="GO:0044208">
    <property type="term" value="P:'de novo' AMP biosynthetic process"/>
    <property type="evidence" value="ECO:0007669"/>
    <property type="project" value="UniProtKB-UniRule"/>
</dbReference>
<dbReference type="GO" id="GO:0046040">
    <property type="term" value="P:IMP metabolic process"/>
    <property type="evidence" value="ECO:0007669"/>
    <property type="project" value="TreeGrafter"/>
</dbReference>
<dbReference type="CDD" id="cd03108">
    <property type="entry name" value="AdSS"/>
    <property type="match status" value="1"/>
</dbReference>
<dbReference type="FunFam" id="1.10.300.10:FF:000001">
    <property type="entry name" value="Adenylosuccinate synthetase"/>
    <property type="match status" value="1"/>
</dbReference>
<dbReference type="FunFam" id="3.90.170.10:FF:000001">
    <property type="entry name" value="Adenylosuccinate synthetase"/>
    <property type="match status" value="1"/>
</dbReference>
<dbReference type="Gene3D" id="3.40.440.10">
    <property type="entry name" value="Adenylosuccinate Synthetase, subunit A, domain 1"/>
    <property type="match status" value="1"/>
</dbReference>
<dbReference type="Gene3D" id="1.10.300.10">
    <property type="entry name" value="Adenylosuccinate Synthetase, subunit A, domain 2"/>
    <property type="match status" value="1"/>
</dbReference>
<dbReference type="Gene3D" id="3.90.170.10">
    <property type="entry name" value="Adenylosuccinate Synthetase, subunit A, domain 3"/>
    <property type="match status" value="1"/>
</dbReference>
<dbReference type="HAMAP" id="MF_00011">
    <property type="entry name" value="Adenylosucc_synth"/>
    <property type="match status" value="1"/>
</dbReference>
<dbReference type="InterPro" id="IPR018220">
    <property type="entry name" value="Adenylosuccin_syn_GTP-bd"/>
</dbReference>
<dbReference type="InterPro" id="IPR033128">
    <property type="entry name" value="Adenylosuccin_syn_Lys_AS"/>
</dbReference>
<dbReference type="InterPro" id="IPR042109">
    <property type="entry name" value="Adenylosuccinate_synth_dom1"/>
</dbReference>
<dbReference type="InterPro" id="IPR042110">
    <property type="entry name" value="Adenylosuccinate_synth_dom2"/>
</dbReference>
<dbReference type="InterPro" id="IPR042111">
    <property type="entry name" value="Adenylosuccinate_synth_dom3"/>
</dbReference>
<dbReference type="InterPro" id="IPR001114">
    <property type="entry name" value="Adenylosuccinate_synthetase"/>
</dbReference>
<dbReference type="InterPro" id="IPR027417">
    <property type="entry name" value="P-loop_NTPase"/>
</dbReference>
<dbReference type="NCBIfam" id="NF002223">
    <property type="entry name" value="PRK01117.1"/>
    <property type="match status" value="1"/>
</dbReference>
<dbReference type="NCBIfam" id="TIGR00184">
    <property type="entry name" value="purA"/>
    <property type="match status" value="1"/>
</dbReference>
<dbReference type="PANTHER" id="PTHR11846">
    <property type="entry name" value="ADENYLOSUCCINATE SYNTHETASE"/>
    <property type="match status" value="1"/>
</dbReference>
<dbReference type="PANTHER" id="PTHR11846:SF0">
    <property type="entry name" value="ADENYLOSUCCINATE SYNTHETASE"/>
    <property type="match status" value="1"/>
</dbReference>
<dbReference type="Pfam" id="PF00709">
    <property type="entry name" value="Adenylsucc_synt"/>
    <property type="match status" value="1"/>
</dbReference>
<dbReference type="SMART" id="SM00788">
    <property type="entry name" value="Adenylsucc_synt"/>
    <property type="match status" value="1"/>
</dbReference>
<dbReference type="SUPFAM" id="SSF52540">
    <property type="entry name" value="P-loop containing nucleoside triphosphate hydrolases"/>
    <property type="match status" value="1"/>
</dbReference>
<dbReference type="PROSITE" id="PS01266">
    <property type="entry name" value="ADENYLOSUCCIN_SYN_1"/>
    <property type="match status" value="1"/>
</dbReference>
<dbReference type="PROSITE" id="PS00513">
    <property type="entry name" value="ADENYLOSUCCIN_SYN_2"/>
    <property type="match status" value="1"/>
</dbReference>